<gene>
    <name type="ORF">SPBC32H8.15</name>
</gene>
<protein>
    <recommendedName>
        <fullName>Putative uncharacterized protein C32H8.15</fullName>
    </recommendedName>
</protein>
<organism>
    <name type="scientific">Schizosaccharomyces pombe (strain 972 / ATCC 24843)</name>
    <name type="common">Fission yeast</name>
    <dbReference type="NCBI Taxonomy" id="284812"/>
    <lineage>
        <taxon>Eukaryota</taxon>
        <taxon>Fungi</taxon>
        <taxon>Dikarya</taxon>
        <taxon>Ascomycota</taxon>
        <taxon>Taphrinomycotina</taxon>
        <taxon>Schizosaccharomycetes</taxon>
        <taxon>Schizosaccharomycetales</taxon>
        <taxon>Schizosaccharomycetaceae</taxon>
        <taxon>Schizosaccharomyces</taxon>
    </lineage>
</organism>
<proteinExistence type="predicted"/>
<accession>G2TRQ1</accession>
<name>YNHF_SCHPO</name>
<keyword id="KW-0472">Membrane</keyword>
<keyword id="KW-1185">Reference proteome</keyword>
<keyword id="KW-0812">Transmembrane</keyword>
<keyword id="KW-1133">Transmembrane helix</keyword>
<evidence type="ECO:0000255" key="1"/>
<evidence type="ECO:0000305" key="2"/>
<sequence length="101" mass="11425">MTFRYSNIAHTLFISIMCLFSIPLCFSLSIFFFLSSHSLSFAIHCYAPLSTSLHCGWPHKVDMQYFFPWSRILRPTWVGRALLSKGGVIEMLGGEAGMLGK</sequence>
<reference key="1">
    <citation type="journal article" date="2002" name="Nature">
        <title>The genome sequence of Schizosaccharomyces pombe.</title>
        <authorList>
            <person name="Wood V."/>
            <person name="Gwilliam R."/>
            <person name="Rajandream M.A."/>
            <person name="Lyne M.H."/>
            <person name="Lyne R."/>
            <person name="Stewart A."/>
            <person name="Sgouros J.G."/>
            <person name="Peat N."/>
            <person name="Hayles J."/>
            <person name="Baker S.G."/>
            <person name="Basham D."/>
            <person name="Bowman S."/>
            <person name="Brooks K."/>
            <person name="Brown D."/>
            <person name="Brown S."/>
            <person name="Chillingworth T."/>
            <person name="Churcher C.M."/>
            <person name="Collins M."/>
            <person name="Connor R."/>
            <person name="Cronin A."/>
            <person name="Davis P."/>
            <person name="Feltwell T."/>
            <person name="Fraser A."/>
            <person name="Gentles S."/>
            <person name="Goble A."/>
            <person name="Hamlin N."/>
            <person name="Harris D.E."/>
            <person name="Hidalgo J."/>
            <person name="Hodgson G."/>
            <person name="Holroyd S."/>
            <person name="Hornsby T."/>
            <person name="Howarth S."/>
            <person name="Huckle E.J."/>
            <person name="Hunt S."/>
            <person name="Jagels K."/>
            <person name="James K.D."/>
            <person name="Jones L."/>
            <person name="Jones M."/>
            <person name="Leather S."/>
            <person name="McDonald S."/>
            <person name="McLean J."/>
            <person name="Mooney P."/>
            <person name="Moule S."/>
            <person name="Mungall K.L."/>
            <person name="Murphy L.D."/>
            <person name="Niblett D."/>
            <person name="Odell C."/>
            <person name="Oliver K."/>
            <person name="O'Neil S."/>
            <person name="Pearson D."/>
            <person name="Quail M.A."/>
            <person name="Rabbinowitsch E."/>
            <person name="Rutherford K.M."/>
            <person name="Rutter S."/>
            <person name="Saunders D."/>
            <person name="Seeger K."/>
            <person name="Sharp S."/>
            <person name="Skelton J."/>
            <person name="Simmonds M.N."/>
            <person name="Squares R."/>
            <person name="Squares S."/>
            <person name="Stevens K."/>
            <person name="Taylor K."/>
            <person name="Taylor R.G."/>
            <person name="Tivey A."/>
            <person name="Walsh S.V."/>
            <person name="Warren T."/>
            <person name="Whitehead S."/>
            <person name="Woodward J.R."/>
            <person name="Volckaert G."/>
            <person name="Aert R."/>
            <person name="Robben J."/>
            <person name="Grymonprez B."/>
            <person name="Weltjens I."/>
            <person name="Vanstreels E."/>
            <person name="Rieger M."/>
            <person name="Schaefer M."/>
            <person name="Mueller-Auer S."/>
            <person name="Gabel C."/>
            <person name="Fuchs M."/>
            <person name="Duesterhoeft A."/>
            <person name="Fritzc C."/>
            <person name="Holzer E."/>
            <person name="Moestl D."/>
            <person name="Hilbert H."/>
            <person name="Borzym K."/>
            <person name="Langer I."/>
            <person name="Beck A."/>
            <person name="Lehrach H."/>
            <person name="Reinhardt R."/>
            <person name="Pohl T.M."/>
            <person name="Eger P."/>
            <person name="Zimmermann W."/>
            <person name="Wedler H."/>
            <person name="Wambutt R."/>
            <person name="Purnelle B."/>
            <person name="Goffeau A."/>
            <person name="Cadieu E."/>
            <person name="Dreano S."/>
            <person name="Gloux S."/>
            <person name="Lelaure V."/>
            <person name="Mottier S."/>
            <person name="Galibert F."/>
            <person name="Aves S.J."/>
            <person name="Xiang Z."/>
            <person name="Hunt C."/>
            <person name="Moore K."/>
            <person name="Hurst S.M."/>
            <person name="Lucas M."/>
            <person name="Rochet M."/>
            <person name="Gaillardin C."/>
            <person name="Tallada V.A."/>
            <person name="Garzon A."/>
            <person name="Thode G."/>
            <person name="Daga R.R."/>
            <person name="Cruzado L."/>
            <person name="Jimenez J."/>
            <person name="Sanchez M."/>
            <person name="del Rey F."/>
            <person name="Benito J."/>
            <person name="Dominguez A."/>
            <person name="Revuelta J.L."/>
            <person name="Moreno S."/>
            <person name="Armstrong J."/>
            <person name="Forsburg S.L."/>
            <person name="Cerutti L."/>
            <person name="Lowe T."/>
            <person name="McCombie W.R."/>
            <person name="Paulsen I."/>
            <person name="Potashkin J."/>
            <person name="Shpakovski G.V."/>
            <person name="Ussery D."/>
            <person name="Barrell B.G."/>
            <person name="Nurse P."/>
        </authorList>
    </citation>
    <scope>NUCLEOTIDE SEQUENCE [LARGE SCALE GENOMIC DNA]</scope>
    <source>
        <strain>972 / ATCC 24843</strain>
    </source>
</reference>
<reference key="2">
    <citation type="journal article" date="2011" name="Science">
        <title>Comparative functional genomics of the fission yeasts.</title>
        <authorList>
            <person name="Rhind N."/>
            <person name="Chen Z."/>
            <person name="Yassour M."/>
            <person name="Thompson D.A."/>
            <person name="Haas B.J."/>
            <person name="Habib N."/>
            <person name="Wapinski I."/>
            <person name="Roy S."/>
            <person name="Lin M.F."/>
            <person name="Heiman D.I."/>
            <person name="Young S.K."/>
            <person name="Furuya K."/>
            <person name="Guo Y."/>
            <person name="Pidoux A."/>
            <person name="Chen H.M."/>
            <person name="Robbertse B."/>
            <person name="Goldberg J.M."/>
            <person name="Aoki K."/>
            <person name="Bayne E.H."/>
            <person name="Berlin A.M."/>
            <person name="Desjardins C.A."/>
            <person name="Dobbs E."/>
            <person name="Dukaj L."/>
            <person name="Fan L."/>
            <person name="FitzGerald M.G."/>
            <person name="French C."/>
            <person name="Gujja S."/>
            <person name="Hansen K."/>
            <person name="Keifenheim D."/>
            <person name="Levin J.Z."/>
            <person name="Mosher R.A."/>
            <person name="Mueller C.A."/>
            <person name="Pfiffner J."/>
            <person name="Priest M."/>
            <person name="Russ C."/>
            <person name="Smialowska A."/>
            <person name="Swoboda P."/>
            <person name="Sykes S.M."/>
            <person name="Vaughn M."/>
            <person name="Vengrova S."/>
            <person name="Yoder R."/>
            <person name="Zeng Q."/>
            <person name="Allshire R."/>
            <person name="Baulcombe D."/>
            <person name="Birren B.W."/>
            <person name="Brown W."/>
            <person name="Ekwall K."/>
            <person name="Kellis M."/>
            <person name="Leatherwood J."/>
            <person name="Levin H."/>
            <person name="Margalit H."/>
            <person name="Martienssen R."/>
            <person name="Nieduszynski C.A."/>
            <person name="Spatafora J.W."/>
            <person name="Friedman N."/>
            <person name="Dalgaard J.Z."/>
            <person name="Baumann P."/>
            <person name="Niki H."/>
            <person name="Regev A."/>
            <person name="Nusbaum C."/>
        </authorList>
    </citation>
    <scope>IDENTIFICATION</scope>
</reference>
<feature type="chain" id="PRO_0000416658" description="Putative uncharacterized protein C32H8.15">
    <location>
        <begin position="1"/>
        <end position="101"/>
    </location>
</feature>
<feature type="transmembrane region" description="Helical" evidence="1">
    <location>
        <begin position="13"/>
        <end position="33"/>
    </location>
</feature>
<comment type="subcellular location">
    <subcellularLocation>
        <location evidence="2">Membrane</location>
        <topology evidence="2">Single-pass membrane protein</topology>
    </subcellularLocation>
</comment>
<dbReference type="EMBL" id="CU329671">
    <property type="protein sequence ID" value="CCD31361.1"/>
    <property type="molecule type" value="Genomic_DNA"/>
</dbReference>
<dbReference type="RefSeq" id="XP_004001708.1">
    <property type="nucleotide sequence ID" value="XM_004001659.1"/>
</dbReference>
<dbReference type="STRING" id="284812.G2TRQ1"/>
<dbReference type="PaxDb" id="4896-SPBC32H8.15.1"/>
<dbReference type="EnsemblFungi" id="SPBC32H8.15.1">
    <property type="protein sequence ID" value="SPBC32H8.15.1:pep"/>
    <property type="gene ID" value="SPBC32H8.15"/>
</dbReference>
<dbReference type="PomBase" id="SPBC32H8.15"/>
<dbReference type="VEuPathDB" id="FungiDB:SPBC32H8.15"/>
<dbReference type="HOGENOM" id="CLU_2293314_0_0_1"/>
<dbReference type="InParanoid" id="G2TRQ1"/>
<dbReference type="PRO" id="PR:G2TRQ1"/>
<dbReference type="Proteomes" id="UP000002485">
    <property type="component" value="Chromosome II"/>
</dbReference>
<dbReference type="GO" id="GO:0016020">
    <property type="term" value="C:membrane"/>
    <property type="evidence" value="ECO:0007669"/>
    <property type="project" value="UniProtKB-SubCell"/>
</dbReference>